<sequence>MRPSRYAPLLCAMVLALAWLSAVAGCSRGGSSKAGRSSSVAGTLPAGVVGVSPAGVTTRVDAPAESTEEEYYQACHAARLWMDAQPGSGESLIEPYLAVVQASPSGVAGSWHIRWAALTPARQAAVIVAARAAANAECG</sequence>
<keyword id="KW-1003">Cell membrane</keyword>
<keyword id="KW-0449">Lipoprotein</keyword>
<keyword id="KW-0472">Membrane</keyword>
<keyword id="KW-0564">Palmitate</keyword>
<keyword id="KW-1185">Reference proteome</keyword>
<keyword id="KW-0732">Signal</keyword>
<proteinExistence type="inferred from homology"/>
<accession>P9WK57</accession>
<accession>L0T5L6</accession>
<accession>O53412</accession>
<accession>P65310</accession>
<evidence type="ECO:0000255" key="1">
    <source>
        <dbReference type="PROSITE-ProRule" id="PRU00303"/>
    </source>
</evidence>
<name>LPQV_MYCTU</name>
<reference key="1">
    <citation type="journal article" date="1998" name="Nature">
        <title>Deciphering the biology of Mycobacterium tuberculosis from the complete genome sequence.</title>
        <authorList>
            <person name="Cole S.T."/>
            <person name="Brosch R."/>
            <person name="Parkhill J."/>
            <person name="Garnier T."/>
            <person name="Churcher C.M."/>
            <person name="Harris D.E."/>
            <person name="Gordon S.V."/>
            <person name="Eiglmeier K."/>
            <person name="Gas S."/>
            <person name="Barry C.E. III"/>
            <person name="Tekaia F."/>
            <person name="Badcock K."/>
            <person name="Basham D."/>
            <person name="Brown D."/>
            <person name="Chillingworth T."/>
            <person name="Connor R."/>
            <person name="Davies R.M."/>
            <person name="Devlin K."/>
            <person name="Feltwell T."/>
            <person name="Gentles S."/>
            <person name="Hamlin N."/>
            <person name="Holroyd S."/>
            <person name="Hornsby T."/>
            <person name="Jagels K."/>
            <person name="Krogh A."/>
            <person name="McLean J."/>
            <person name="Moule S."/>
            <person name="Murphy L.D."/>
            <person name="Oliver S."/>
            <person name="Osborne J."/>
            <person name="Quail M.A."/>
            <person name="Rajandream M.A."/>
            <person name="Rogers J."/>
            <person name="Rutter S."/>
            <person name="Seeger K."/>
            <person name="Skelton S."/>
            <person name="Squares S."/>
            <person name="Squares R."/>
            <person name="Sulston J.E."/>
            <person name="Taylor K."/>
            <person name="Whitehead S."/>
            <person name="Barrell B.G."/>
        </authorList>
    </citation>
    <scope>NUCLEOTIDE SEQUENCE [LARGE SCALE GENOMIC DNA]</scope>
    <source>
        <strain>ATCC 25618 / H37Rv</strain>
    </source>
</reference>
<gene>
    <name type="primary">lpqV</name>
    <name type="ordered locus">Rv1064c</name>
    <name type="ORF">MTV017.17c</name>
</gene>
<dbReference type="EMBL" id="AL123456">
    <property type="protein sequence ID" value="CCP43815.1"/>
    <property type="molecule type" value="Genomic_DNA"/>
</dbReference>
<dbReference type="PIR" id="F70892">
    <property type="entry name" value="F70892"/>
</dbReference>
<dbReference type="RefSeq" id="NP_215580.1">
    <property type="nucleotide sequence ID" value="NC_000962.3"/>
</dbReference>
<dbReference type="RefSeq" id="WP_003405645.1">
    <property type="nucleotide sequence ID" value="NZ_NVQJ01000060.1"/>
</dbReference>
<dbReference type="STRING" id="83332.Rv1064c"/>
<dbReference type="PaxDb" id="83332-Rv1064c"/>
<dbReference type="DNASU" id="887126"/>
<dbReference type="GeneID" id="887126"/>
<dbReference type="KEGG" id="mtu:Rv1064c"/>
<dbReference type="KEGG" id="mtv:RVBD_1064c"/>
<dbReference type="TubercuList" id="Rv1064c"/>
<dbReference type="eggNOG" id="ENOG5031NHV">
    <property type="taxonomic scope" value="Bacteria"/>
</dbReference>
<dbReference type="InParanoid" id="P9WK57"/>
<dbReference type="OrthoDB" id="4639220at2"/>
<dbReference type="Proteomes" id="UP000001584">
    <property type="component" value="Chromosome"/>
</dbReference>
<dbReference type="GO" id="GO:0005886">
    <property type="term" value="C:plasma membrane"/>
    <property type="evidence" value="ECO:0007669"/>
    <property type="project" value="UniProtKB-SubCell"/>
</dbReference>
<dbReference type="InterPro" id="IPR020377">
    <property type="entry name" value="Uncharacterised_LpqV"/>
</dbReference>
<dbReference type="Pfam" id="PF17301">
    <property type="entry name" value="LpqV"/>
    <property type="match status" value="1"/>
</dbReference>
<dbReference type="PROSITE" id="PS51257">
    <property type="entry name" value="PROKAR_LIPOPROTEIN"/>
    <property type="match status" value="1"/>
</dbReference>
<organism>
    <name type="scientific">Mycobacterium tuberculosis (strain ATCC 25618 / H37Rv)</name>
    <dbReference type="NCBI Taxonomy" id="83332"/>
    <lineage>
        <taxon>Bacteria</taxon>
        <taxon>Bacillati</taxon>
        <taxon>Actinomycetota</taxon>
        <taxon>Actinomycetes</taxon>
        <taxon>Mycobacteriales</taxon>
        <taxon>Mycobacteriaceae</taxon>
        <taxon>Mycobacterium</taxon>
        <taxon>Mycobacterium tuberculosis complex</taxon>
    </lineage>
</organism>
<comment type="subcellular location">
    <subcellularLocation>
        <location evidence="1">Cell membrane</location>
        <topology evidence="1">Lipid-anchor</topology>
    </subcellularLocation>
</comment>
<protein>
    <recommendedName>
        <fullName>Putative lipoprotein LpqV</fullName>
    </recommendedName>
</protein>
<feature type="signal peptide" evidence="1">
    <location>
        <begin position="1"/>
        <end position="25"/>
    </location>
</feature>
<feature type="chain" id="PRO_0000018133" description="Putative lipoprotein LpqV">
    <location>
        <begin position="26"/>
        <end position="139"/>
    </location>
</feature>
<feature type="lipid moiety-binding region" description="N-palmitoyl cysteine" evidence="1">
    <location>
        <position position="26"/>
    </location>
</feature>
<feature type="lipid moiety-binding region" description="S-diacylglycerol cysteine" evidence="1">
    <location>
        <position position="26"/>
    </location>
</feature>